<organism>
    <name type="scientific">Xenopus laevis</name>
    <name type="common">African clawed frog</name>
    <dbReference type="NCBI Taxonomy" id="8355"/>
    <lineage>
        <taxon>Eukaryota</taxon>
        <taxon>Metazoa</taxon>
        <taxon>Chordata</taxon>
        <taxon>Craniata</taxon>
        <taxon>Vertebrata</taxon>
        <taxon>Euteleostomi</taxon>
        <taxon>Amphibia</taxon>
        <taxon>Batrachia</taxon>
        <taxon>Anura</taxon>
        <taxon>Pipoidea</taxon>
        <taxon>Pipidae</taxon>
        <taxon>Xenopodinae</taxon>
        <taxon>Xenopus</taxon>
        <taxon>Xenopus</taxon>
    </lineage>
</organism>
<name>VITB1_XENLA</name>
<sequence length="71" mass="7905">MRGIILAQLLALAGSEKSQYEPFFSESKPYVYNYEGIILNGIPENGLARSGIKLNCKAEISGYAQRSYMLK</sequence>
<comment type="function">
    <text>Precursor of the major egg-yolk proteins that are sources of nutrients during early development of oviparous organisms.</text>
</comment>
<comment type="tissue specificity">
    <text>Produced by the liver, secreted into the blood and then sequestered by receptor mediated endocytosis into growing oocytes, where it is generally cleaved, giving rise to the respective yolk components.</text>
</comment>
<comment type="induction">
    <text>By steroids (estrogen).</text>
</comment>
<proteinExistence type="evidence at protein level"/>
<dbReference type="EMBL" id="X01170">
    <property type="protein sequence ID" value="CAA25616.1"/>
    <property type="molecule type" value="Genomic_DNA"/>
</dbReference>
<dbReference type="PIR" id="C23876">
    <property type="entry name" value="C23876"/>
</dbReference>
<dbReference type="SMR" id="P19010"/>
<dbReference type="AGR" id="Xenbase:XB-GENE-5749200"/>
<dbReference type="Xenbase" id="XB-GENE-5749200">
    <property type="gene designation" value="vtgb1.L"/>
</dbReference>
<dbReference type="Proteomes" id="UP000186698">
    <property type="component" value="Unplaced"/>
</dbReference>
<dbReference type="GO" id="GO:0005319">
    <property type="term" value="F:lipid transporter activity"/>
    <property type="evidence" value="ECO:0007669"/>
    <property type="project" value="InterPro"/>
</dbReference>
<dbReference type="GO" id="GO:0045735">
    <property type="term" value="F:nutrient reservoir activity"/>
    <property type="evidence" value="ECO:0007669"/>
    <property type="project" value="UniProtKB-KW"/>
</dbReference>
<dbReference type="GO" id="GO:0071391">
    <property type="term" value="P:cellular response to estrogen stimulus"/>
    <property type="evidence" value="ECO:0007669"/>
    <property type="project" value="TreeGrafter"/>
</dbReference>
<dbReference type="GO" id="GO:0032355">
    <property type="term" value="P:response to estradiol"/>
    <property type="evidence" value="ECO:0007669"/>
    <property type="project" value="TreeGrafter"/>
</dbReference>
<dbReference type="Gene3D" id="2.30.230.10">
    <property type="entry name" value="Lipovitellin, beta-sheet shell regions, chain A"/>
    <property type="match status" value="1"/>
</dbReference>
<dbReference type="InterPro" id="IPR015819">
    <property type="entry name" value="Lipid_transp_b-sht_shell"/>
</dbReference>
<dbReference type="InterPro" id="IPR015816">
    <property type="entry name" value="Vitellinogen_b-sht_N"/>
</dbReference>
<dbReference type="InterPro" id="IPR050733">
    <property type="entry name" value="Vitellogenin/Apolipophorin"/>
</dbReference>
<dbReference type="InterPro" id="IPR001747">
    <property type="entry name" value="Vitellogenin_N"/>
</dbReference>
<dbReference type="PANTHER" id="PTHR23345:SF15">
    <property type="entry name" value="VITELLOGENIN 1-RELATED"/>
    <property type="match status" value="1"/>
</dbReference>
<dbReference type="PANTHER" id="PTHR23345">
    <property type="entry name" value="VITELLOGENIN-RELATED"/>
    <property type="match status" value="1"/>
</dbReference>
<dbReference type="Pfam" id="PF01347">
    <property type="entry name" value="Vitellogenin_N"/>
    <property type="match status" value="1"/>
</dbReference>
<dbReference type="SUPFAM" id="SSF56968">
    <property type="entry name" value="Lipovitellin-phosvitin complex, beta-sheet shell regions"/>
    <property type="match status" value="1"/>
</dbReference>
<keyword id="KW-0903">Direct protein sequencing</keyword>
<keyword id="KW-0597">Phosphoprotein</keyword>
<keyword id="KW-1185">Reference proteome</keyword>
<keyword id="KW-0732">Signal</keyword>
<keyword id="KW-0758">Storage protein</keyword>
<feature type="signal peptide" evidence="2">
    <location>
        <begin position="1"/>
        <end position="15"/>
    </location>
</feature>
<feature type="chain" id="PRO_0000041589" description="Vitellogenin-B1">
    <location>
        <begin position="16"/>
        <end position="71" status="greater than"/>
    </location>
</feature>
<feature type="domain" description="Vitellogenin" evidence="1">
    <location>
        <begin position="24"/>
        <end position="71" status="greater than"/>
    </location>
</feature>
<feature type="non-terminal residue">
    <location>
        <position position="71"/>
    </location>
</feature>
<evidence type="ECO:0000255" key="1">
    <source>
        <dbReference type="PROSITE-ProRule" id="PRU00557"/>
    </source>
</evidence>
<evidence type="ECO:0000269" key="2">
    <source>
    </source>
</evidence>
<reference key="1">
    <citation type="journal article" date="1984" name="Nucleic Acids Res.">
        <title>Evolution of vitellogenin genes: comparative analysis of the nucleotide sequences downstream of the transcription initiation site of four Xenopus laevis and one chicken gene.</title>
        <authorList>
            <person name="Germond J.-E."/>
            <person name="Walker P."/>
            <person name="ten Heggeler B."/>
            <person name="Brown-Luedi M."/>
            <person name="de Bony E."/>
            <person name="Wahli W."/>
        </authorList>
    </citation>
    <scope>NUCLEOTIDE SEQUENCE [GENOMIC DNA]</scope>
</reference>
<reference key="2">
    <citation type="journal article" date="1994" name="Biochem. Biophys. Res. Commun.">
        <title>Xenopus laevis vitellogenin is a zinc protein.</title>
        <authorList>
            <person name="Montorzi M."/>
            <person name="Falchuk K.H."/>
            <person name="Vallee B.L."/>
        </authorList>
    </citation>
    <scope>PROTEIN SEQUENCE OF 16-25</scope>
</reference>
<protein>
    <recommendedName>
        <fullName>Vitellogenin-B1</fullName>
        <shortName>VTG B1</shortName>
    </recommendedName>
</protein>
<accession>P19010</accession>